<organism>
    <name type="scientific">Salmonella enteritidis PT4 (strain P125109)</name>
    <dbReference type="NCBI Taxonomy" id="550537"/>
    <lineage>
        <taxon>Bacteria</taxon>
        <taxon>Pseudomonadati</taxon>
        <taxon>Pseudomonadota</taxon>
        <taxon>Gammaproteobacteria</taxon>
        <taxon>Enterobacterales</taxon>
        <taxon>Enterobacteriaceae</taxon>
        <taxon>Salmonella</taxon>
    </lineage>
</organism>
<accession>B5R395</accession>
<dbReference type="EC" id="2.7.7.27" evidence="1"/>
<dbReference type="EMBL" id="AM933172">
    <property type="protein sequence ID" value="CAR34936.1"/>
    <property type="molecule type" value="Genomic_DNA"/>
</dbReference>
<dbReference type="RefSeq" id="WP_000253995.1">
    <property type="nucleotide sequence ID" value="NC_011294.1"/>
</dbReference>
<dbReference type="SMR" id="B5R395"/>
<dbReference type="KEGG" id="set:SEN3360"/>
<dbReference type="HOGENOM" id="CLU_029499_14_1_6"/>
<dbReference type="UniPathway" id="UPA00164"/>
<dbReference type="Proteomes" id="UP000000613">
    <property type="component" value="Chromosome"/>
</dbReference>
<dbReference type="GO" id="GO:0005524">
    <property type="term" value="F:ATP binding"/>
    <property type="evidence" value="ECO:0007669"/>
    <property type="project" value="UniProtKB-KW"/>
</dbReference>
<dbReference type="GO" id="GO:0008878">
    <property type="term" value="F:glucose-1-phosphate adenylyltransferase activity"/>
    <property type="evidence" value="ECO:0007669"/>
    <property type="project" value="UniProtKB-UniRule"/>
</dbReference>
<dbReference type="GO" id="GO:0005978">
    <property type="term" value="P:glycogen biosynthetic process"/>
    <property type="evidence" value="ECO:0007669"/>
    <property type="project" value="UniProtKB-UniRule"/>
</dbReference>
<dbReference type="CDD" id="cd02508">
    <property type="entry name" value="ADP_Glucose_PP"/>
    <property type="match status" value="1"/>
</dbReference>
<dbReference type="CDD" id="cd04651">
    <property type="entry name" value="LbH_G1P_AT_C"/>
    <property type="match status" value="1"/>
</dbReference>
<dbReference type="FunFam" id="2.160.10.10:FF:000006">
    <property type="entry name" value="Glucose-1-phosphate adenylyltransferase"/>
    <property type="match status" value="1"/>
</dbReference>
<dbReference type="FunFam" id="3.90.550.10:FF:000014">
    <property type="entry name" value="Glucose-1-phosphate adenylyltransferase"/>
    <property type="match status" value="1"/>
</dbReference>
<dbReference type="Gene3D" id="2.160.10.10">
    <property type="entry name" value="Hexapeptide repeat proteins"/>
    <property type="match status" value="1"/>
</dbReference>
<dbReference type="Gene3D" id="3.90.550.10">
    <property type="entry name" value="Spore Coat Polysaccharide Biosynthesis Protein SpsA, Chain A"/>
    <property type="match status" value="1"/>
</dbReference>
<dbReference type="HAMAP" id="MF_00624">
    <property type="entry name" value="GlgC"/>
    <property type="match status" value="1"/>
</dbReference>
<dbReference type="InterPro" id="IPR011831">
    <property type="entry name" value="ADP-Glc_PPase"/>
</dbReference>
<dbReference type="InterPro" id="IPR005836">
    <property type="entry name" value="ADP_Glu_pyroP_CS"/>
</dbReference>
<dbReference type="InterPro" id="IPR023049">
    <property type="entry name" value="GlgC_bac"/>
</dbReference>
<dbReference type="InterPro" id="IPR056818">
    <property type="entry name" value="GlmU/GlgC-like_hexapep"/>
</dbReference>
<dbReference type="InterPro" id="IPR005835">
    <property type="entry name" value="NTP_transferase_dom"/>
</dbReference>
<dbReference type="InterPro" id="IPR029044">
    <property type="entry name" value="Nucleotide-diphossugar_trans"/>
</dbReference>
<dbReference type="InterPro" id="IPR011004">
    <property type="entry name" value="Trimer_LpxA-like_sf"/>
</dbReference>
<dbReference type="NCBIfam" id="TIGR02091">
    <property type="entry name" value="glgC"/>
    <property type="match status" value="1"/>
</dbReference>
<dbReference type="NCBIfam" id="NF001947">
    <property type="entry name" value="PRK00725.1"/>
    <property type="match status" value="1"/>
</dbReference>
<dbReference type="NCBIfam" id="NF002023">
    <property type="entry name" value="PRK00844.1"/>
    <property type="match status" value="1"/>
</dbReference>
<dbReference type="PANTHER" id="PTHR43523:SF2">
    <property type="entry name" value="GLUCOSE-1-PHOSPHATE ADENYLYLTRANSFERASE"/>
    <property type="match status" value="1"/>
</dbReference>
<dbReference type="PANTHER" id="PTHR43523">
    <property type="entry name" value="GLUCOSE-1-PHOSPHATE ADENYLYLTRANSFERASE-RELATED"/>
    <property type="match status" value="1"/>
</dbReference>
<dbReference type="Pfam" id="PF24894">
    <property type="entry name" value="Hexapep_GlmU"/>
    <property type="match status" value="1"/>
</dbReference>
<dbReference type="Pfam" id="PF00483">
    <property type="entry name" value="NTP_transferase"/>
    <property type="match status" value="1"/>
</dbReference>
<dbReference type="SUPFAM" id="SSF53448">
    <property type="entry name" value="Nucleotide-diphospho-sugar transferases"/>
    <property type="match status" value="1"/>
</dbReference>
<dbReference type="SUPFAM" id="SSF51161">
    <property type="entry name" value="Trimeric LpxA-like enzymes"/>
    <property type="match status" value="1"/>
</dbReference>
<dbReference type="PROSITE" id="PS00808">
    <property type="entry name" value="ADP_GLC_PYROPHOSPH_1"/>
    <property type="match status" value="1"/>
</dbReference>
<dbReference type="PROSITE" id="PS00809">
    <property type="entry name" value="ADP_GLC_PYROPHOSPH_2"/>
    <property type="match status" value="1"/>
</dbReference>
<dbReference type="PROSITE" id="PS00810">
    <property type="entry name" value="ADP_GLC_PYROPHOSPH_3"/>
    <property type="match status" value="1"/>
</dbReference>
<feature type="chain" id="PRO_1000130499" description="Glucose-1-phosphate adenylyltransferase">
    <location>
        <begin position="1"/>
        <end position="431"/>
    </location>
</feature>
<feature type="binding site" evidence="1">
    <location>
        <position position="39"/>
    </location>
    <ligand>
        <name>beta-D-fructose 1,6-bisphosphate</name>
        <dbReference type="ChEBI" id="CHEBI:32966"/>
    </ligand>
</feature>
<feature type="binding site" evidence="1">
    <location>
        <position position="40"/>
    </location>
    <ligand>
        <name>AMP</name>
        <dbReference type="ChEBI" id="CHEBI:456215"/>
    </ligand>
</feature>
<feature type="binding site" evidence="1">
    <location>
        <position position="46"/>
    </location>
    <ligand>
        <name>AMP</name>
        <dbReference type="ChEBI" id="CHEBI:456215"/>
    </ligand>
</feature>
<feature type="binding site" evidence="1">
    <location>
        <position position="52"/>
    </location>
    <ligand>
        <name>AMP</name>
        <dbReference type="ChEBI" id="CHEBI:456215"/>
    </ligand>
</feature>
<feature type="binding site" evidence="1">
    <location>
        <position position="114"/>
    </location>
    <ligand>
        <name>alpha-D-glucose 1-phosphate</name>
        <dbReference type="ChEBI" id="CHEBI:58601"/>
    </ligand>
</feature>
<feature type="binding site" evidence="1">
    <location>
        <position position="130"/>
    </location>
    <ligand>
        <name>AMP</name>
        <dbReference type="ChEBI" id="CHEBI:456215"/>
    </ligand>
</feature>
<feature type="binding site" evidence="1">
    <location>
        <position position="179"/>
    </location>
    <ligand>
        <name>alpha-D-glucose 1-phosphate</name>
        <dbReference type="ChEBI" id="CHEBI:58601"/>
    </ligand>
</feature>
<feature type="binding site" evidence="1">
    <location>
        <begin position="194"/>
        <end position="195"/>
    </location>
    <ligand>
        <name>alpha-D-glucose 1-phosphate</name>
        <dbReference type="ChEBI" id="CHEBI:58601"/>
    </ligand>
</feature>
<feature type="binding site" evidence="1">
    <location>
        <position position="212"/>
    </location>
    <ligand>
        <name>alpha-D-glucose 1-phosphate</name>
        <dbReference type="ChEBI" id="CHEBI:58601"/>
    </ligand>
</feature>
<feature type="binding site" evidence="1">
    <location>
        <position position="370"/>
    </location>
    <ligand>
        <name>AMP</name>
        <dbReference type="ChEBI" id="CHEBI:456215"/>
    </ligand>
</feature>
<feature type="binding site" evidence="1">
    <location>
        <position position="386"/>
    </location>
    <ligand>
        <name>AMP</name>
        <dbReference type="ChEBI" id="CHEBI:456215"/>
    </ligand>
</feature>
<feature type="binding site" evidence="1">
    <location>
        <begin position="419"/>
        <end position="423"/>
    </location>
    <ligand>
        <name>beta-D-fructose 1,6-bisphosphate</name>
        <dbReference type="ChEBI" id="CHEBI:32966"/>
    </ligand>
</feature>
<feature type="binding site" evidence="1">
    <location>
        <begin position="429"/>
        <end position="431"/>
    </location>
    <ligand>
        <name>beta-D-fructose 1,6-bisphosphate</name>
        <dbReference type="ChEBI" id="CHEBI:32966"/>
    </ligand>
</feature>
<feature type="site" description="Could play a key role in the communication between the regulatory and the substrate sites" evidence="1">
    <location>
        <position position="74"/>
    </location>
</feature>
<feature type="site" description="Could play a key role in the communication between the regulatory and the substrate sites" evidence="1">
    <location>
        <position position="113"/>
    </location>
</feature>
<proteinExistence type="inferred from homology"/>
<keyword id="KW-0021">Allosteric enzyme</keyword>
<keyword id="KW-0067">ATP-binding</keyword>
<keyword id="KW-0119">Carbohydrate metabolism</keyword>
<keyword id="KW-0320">Glycogen biosynthesis</keyword>
<keyword id="KW-0321">Glycogen metabolism</keyword>
<keyword id="KW-0547">Nucleotide-binding</keyword>
<keyword id="KW-0548">Nucleotidyltransferase</keyword>
<keyword id="KW-0808">Transferase</keyword>
<reference key="1">
    <citation type="journal article" date="2008" name="Genome Res.">
        <title>Comparative genome analysis of Salmonella enteritidis PT4 and Salmonella gallinarum 287/91 provides insights into evolutionary and host adaptation pathways.</title>
        <authorList>
            <person name="Thomson N.R."/>
            <person name="Clayton D.J."/>
            <person name="Windhorst D."/>
            <person name="Vernikos G."/>
            <person name="Davidson S."/>
            <person name="Churcher C."/>
            <person name="Quail M.A."/>
            <person name="Stevens M."/>
            <person name="Jones M.A."/>
            <person name="Watson M."/>
            <person name="Barron A."/>
            <person name="Layton A."/>
            <person name="Pickard D."/>
            <person name="Kingsley R.A."/>
            <person name="Bignell A."/>
            <person name="Clark L."/>
            <person name="Harris B."/>
            <person name="Ormond D."/>
            <person name="Abdellah Z."/>
            <person name="Brooks K."/>
            <person name="Cherevach I."/>
            <person name="Chillingworth T."/>
            <person name="Woodward J."/>
            <person name="Norberczak H."/>
            <person name="Lord A."/>
            <person name="Arrowsmith C."/>
            <person name="Jagels K."/>
            <person name="Moule S."/>
            <person name="Mungall K."/>
            <person name="Saunders M."/>
            <person name="Whitehead S."/>
            <person name="Chabalgoity J.A."/>
            <person name="Maskell D."/>
            <person name="Humphreys T."/>
            <person name="Roberts M."/>
            <person name="Barrow P.A."/>
            <person name="Dougan G."/>
            <person name="Parkhill J."/>
        </authorList>
    </citation>
    <scope>NUCLEOTIDE SEQUENCE [LARGE SCALE GENOMIC DNA]</scope>
    <source>
        <strain>P125109</strain>
    </source>
</reference>
<sequence length="431" mass="48462">MVSLEKNDRVMLARQLPLKSVALILAGGRGTRLKDLTNKRAKPAVHFGGKFRIIDFALSNCLNSGIRRIGVITQYQSHTLVQHIQRGWSLFSEEMNEFVDLLPAQQRMKGENWYRGTADAVTQNLDIIRRYKAEYVVILAGDHIYKQDYSRMLIDHVEKGARCTVACMPVPIKEATAFGVMAVDESDKIIDFVEKPANPPAMPGDASKSLASMGIYVFDADYLYELLAADDKDDASSHDFGKDIIPKITREGMAYAHPFPLSCVQSDPQAEPYWRDVGTLEAYWKANLDLASVTPELDMYDQNWPIRTHMESLPPAKFVQDRSGSHGMTLNSLVSGGCIISGSVVVQSVLFPRVRINSFCNIDSAVLLPEVWVGRSCRLRRCVIDRACIIPEGMVIGENAEEDARRFYRSEEGIVLVTREMLRKLQVKQER</sequence>
<protein>
    <recommendedName>
        <fullName evidence="1">Glucose-1-phosphate adenylyltransferase</fullName>
        <ecNumber evidence="1">2.7.7.27</ecNumber>
    </recommendedName>
    <alternativeName>
        <fullName evidence="1">ADP-glucose pyrophosphorylase</fullName>
        <shortName evidence="1">ADPGlc PPase</shortName>
    </alternativeName>
    <alternativeName>
        <fullName evidence="1">ADP-glucose synthase</fullName>
    </alternativeName>
</protein>
<comment type="function">
    <text evidence="1">Involved in the biosynthesis of ADP-glucose, a building block required for the elongation reactions to produce glycogen. Catalyzes the reaction between ATP and alpha-D-glucose 1-phosphate (G1P) to produce pyrophosphate and ADP-Glc.</text>
</comment>
<comment type="catalytic activity">
    <reaction evidence="1">
        <text>alpha-D-glucose 1-phosphate + ATP + H(+) = ADP-alpha-D-glucose + diphosphate</text>
        <dbReference type="Rhea" id="RHEA:12120"/>
        <dbReference type="ChEBI" id="CHEBI:15378"/>
        <dbReference type="ChEBI" id="CHEBI:30616"/>
        <dbReference type="ChEBI" id="CHEBI:33019"/>
        <dbReference type="ChEBI" id="CHEBI:57498"/>
        <dbReference type="ChEBI" id="CHEBI:58601"/>
        <dbReference type="EC" id="2.7.7.27"/>
    </reaction>
</comment>
<comment type="activity regulation">
    <text evidence="1">Allosterically activated by fructose-1,6-bisphosphate (F16BP) and inhibited by AMP.</text>
</comment>
<comment type="pathway">
    <text evidence="1">Glycan biosynthesis; glycogen biosynthesis.</text>
</comment>
<comment type="subunit">
    <text evidence="1">Homotetramer.</text>
</comment>
<comment type="similarity">
    <text evidence="1">Belongs to the bacterial/plant glucose-1-phosphate adenylyltransferase family.</text>
</comment>
<gene>
    <name evidence="1" type="primary">glgC</name>
    <name type="ordered locus">SEN3360</name>
</gene>
<evidence type="ECO:0000255" key="1">
    <source>
        <dbReference type="HAMAP-Rule" id="MF_00624"/>
    </source>
</evidence>
<name>GLGC_SALEP</name>